<organism>
    <name type="scientific">Roseiflexus castenholzii (strain DSM 13941 / HLO8)</name>
    <dbReference type="NCBI Taxonomy" id="383372"/>
    <lineage>
        <taxon>Bacteria</taxon>
        <taxon>Bacillati</taxon>
        <taxon>Chloroflexota</taxon>
        <taxon>Chloroflexia</taxon>
        <taxon>Chloroflexales</taxon>
        <taxon>Roseiflexineae</taxon>
        <taxon>Roseiflexaceae</taxon>
        <taxon>Roseiflexus</taxon>
    </lineage>
</organism>
<dbReference type="EC" id="5.4.3.8" evidence="1"/>
<dbReference type="EMBL" id="CP000804">
    <property type="protein sequence ID" value="ABU58121.1"/>
    <property type="molecule type" value="Genomic_DNA"/>
</dbReference>
<dbReference type="RefSeq" id="WP_012120545.1">
    <property type="nucleotide sequence ID" value="NC_009767.1"/>
</dbReference>
<dbReference type="SMR" id="A7NKV1"/>
<dbReference type="STRING" id="383372.Rcas_2033"/>
<dbReference type="KEGG" id="rca:Rcas_2033"/>
<dbReference type="eggNOG" id="COG0001">
    <property type="taxonomic scope" value="Bacteria"/>
</dbReference>
<dbReference type="HOGENOM" id="CLU_016922_1_5_0"/>
<dbReference type="OrthoDB" id="9807885at2"/>
<dbReference type="UniPathway" id="UPA00251">
    <property type="reaction ID" value="UER00317"/>
</dbReference>
<dbReference type="UniPathway" id="UPA00668"/>
<dbReference type="Proteomes" id="UP000000263">
    <property type="component" value="Chromosome"/>
</dbReference>
<dbReference type="GO" id="GO:0005737">
    <property type="term" value="C:cytoplasm"/>
    <property type="evidence" value="ECO:0007669"/>
    <property type="project" value="UniProtKB-SubCell"/>
</dbReference>
<dbReference type="GO" id="GO:0042286">
    <property type="term" value="F:glutamate-1-semialdehyde 2,1-aminomutase activity"/>
    <property type="evidence" value="ECO:0007669"/>
    <property type="project" value="UniProtKB-UniRule"/>
</dbReference>
<dbReference type="GO" id="GO:0030170">
    <property type="term" value="F:pyridoxal phosphate binding"/>
    <property type="evidence" value="ECO:0007669"/>
    <property type="project" value="InterPro"/>
</dbReference>
<dbReference type="GO" id="GO:0008483">
    <property type="term" value="F:transaminase activity"/>
    <property type="evidence" value="ECO:0007669"/>
    <property type="project" value="InterPro"/>
</dbReference>
<dbReference type="GO" id="GO:0015995">
    <property type="term" value="P:chlorophyll biosynthetic process"/>
    <property type="evidence" value="ECO:0007669"/>
    <property type="project" value="UniProtKB-UniRule"/>
</dbReference>
<dbReference type="GO" id="GO:0006782">
    <property type="term" value="P:protoporphyrinogen IX biosynthetic process"/>
    <property type="evidence" value="ECO:0007669"/>
    <property type="project" value="UniProtKB-UniRule"/>
</dbReference>
<dbReference type="CDD" id="cd00610">
    <property type="entry name" value="OAT_like"/>
    <property type="match status" value="1"/>
</dbReference>
<dbReference type="FunFam" id="3.40.640.10:FF:000021">
    <property type="entry name" value="Glutamate-1-semialdehyde 2,1-aminomutase"/>
    <property type="match status" value="1"/>
</dbReference>
<dbReference type="Gene3D" id="3.90.1150.10">
    <property type="entry name" value="Aspartate Aminotransferase, domain 1"/>
    <property type="match status" value="1"/>
</dbReference>
<dbReference type="Gene3D" id="3.40.640.10">
    <property type="entry name" value="Type I PLP-dependent aspartate aminotransferase-like (Major domain)"/>
    <property type="match status" value="1"/>
</dbReference>
<dbReference type="HAMAP" id="MF_00375">
    <property type="entry name" value="HemL_aminotrans_3"/>
    <property type="match status" value="1"/>
</dbReference>
<dbReference type="InterPro" id="IPR004639">
    <property type="entry name" value="4pyrrol_synth_GluAld_NH2Trfase"/>
</dbReference>
<dbReference type="InterPro" id="IPR005814">
    <property type="entry name" value="Aminotrans_3"/>
</dbReference>
<dbReference type="InterPro" id="IPR049704">
    <property type="entry name" value="Aminotrans_3_PPA_site"/>
</dbReference>
<dbReference type="InterPro" id="IPR015424">
    <property type="entry name" value="PyrdxlP-dep_Trfase"/>
</dbReference>
<dbReference type="InterPro" id="IPR015421">
    <property type="entry name" value="PyrdxlP-dep_Trfase_major"/>
</dbReference>
<dbReference type="InterPro" id="IPR015422">
    <property type="entry name" value="PyrdxlP-dep_Trfase_small"/>
</dbReference>
<dbReference type="NCBIfam" id="TIGR00713">
    <property type="entry name" value="hemL"/>
    <property type="match status" value="1"/>
</dbReference>
<dbReference type="NCBIfam" id="NF000818">
    <property type="entry name" value="PRK00062.1"/>
    <property type="match status" value="1"/>
</dbReference>
<dbReference type="PANTHER" id="PTHR43713">
    <property type="entry name" value="GLUTAMATE-1-SEMIALDEHYDE 2,1-AMINOMUTASE"/>
    <property type="match status" value="1"/>
</dbReference>
<dbReference type="PANTHER" id="PTHR43713:SF3">
    <property type="entry name" value="GLUTAMATE-1-SEMIALDEHYDE 2,1-AMINOMUTASE 1, CHLOROPLASTIC-RELATED"/>
    <property type="match status" value="1"/>
</dbReference>
<dbReference type="Pfam" id="PF00202">
    <property type="entry name" value="Aminotran_3"/>
    <property type="match status" value="1"/>
</dbReference>
<dbReference type="SUPFAM" id="SSF53383">
    <property type="entry name" value="PLP-dependent transferases"/>
    <property type="match status" value="1"/>
</dbReference>
<dbReference type="PROSITE" id="PS00600">
    <property type="entry name" value="AA_TRANSFER_CLASS_3"/>
    <property type="match status" value="1"/>
</dbReference>
<reference key="1">
    <citation type="submission" date="2007-08" db="EMBL/GenBank/DDBJ databases">
        <title>Complete sequence of Roseiflexus castenholzii DSM 13941.</title>
        <authorList>
            <consortium name="US DOE Joint Genome Institute"/>
            <person name="Copeland A."/>
            <person name="Lucas S."/>
            <person name="Lapidus A."/>
            <person name="Barry K."/>
            <person name="Glavina del Rio T."/>
            <person name="Dalin E."/>
            <person name="Tice H."/>
            <person name="Pitluck S."/>
            <person name="Thompson L.S."/>
            <person name="Brettin T."/>
            <person name="Bruce D."/>
            <person name="Detter J.C."/>
            <person name="Han C."/>
            <person name="Tapia R."/>
            <person name="Schmutz J."/>
            <person name="Larimer F."/>
            <person name="Land M."/>
            <person name="Hauser L."/>
            <person name="Kyrpides N."/>
            <person name="Mikhailova N."/>
            <person name="Bryant D.A."/>
            <person name="Hanada S."/>
            <person name="Tsukatani Y."/>
            <person name="Richardson P."/>
        </authorList>
    </citation>
    <scope>NUCLEOTIDE SEQUENCE [LARGE SCALE GENOMIC DNA]</scope>
    <source>
        <strain>DSM 13941 / HLO8</strain>
    </source>
</reference>
<protein>
    <recommendedName>
        <fullName evidence="1">Glutamate-1-semialdehyde 2,1-aminomutase</fullName>
        <shortName evidence="1">GSA</shortName>
        <ecNumber evidence="1">5.4.3.8</ecNumber>
    </recommendedName>
    <alternativeName>
        <fullName evidence="1">Glutamate-1-semialdehyde aminotransferase</fullName>
        <shortName evidence="1">GSA-AT</shortName>
    </alternativeName>
</protein>
<evidence type="ECO:0000255" key="1">
    <source>
        <dbReference type="HAMAP-Rule" id="MF_00375"/>
    </source>
</evidence>
<gene>
    <name evidence="1" type="primary">hemL</name>
    <name type="ordered locus">Rcas_2033</name>
</gene>
<keyword id="KW-0149">Chlorophyll biosynthesis</keyword>
<keyword id="KW-0963">Cytoplasm</keyword>
<keyword id="KW-0413">Isomerase</keyword>
<keyword id="KW-0627">Porphyrin biosynthesis</keyword>
<keyword id="KW-0663">Pyridoxal phosphate</keyword>
<keyword id="KW-1185">Reference proteome</keyword>
<proteinExistence type="inferred from homology"/>
<sequence>MKTYRSESLFAEARSLFPGGVNSPVRAFRAVGGAPRFIARGEGAFLVDVDGNRYIDYVLSWGPLILGHAHPNVVAAIAEQAAHGTSFGAPTELESELARLITQAMPSVEMVRFVSSGTEAAMSALRLARAATRRDKVIKFAGCYHGHFDGFLVQAGSGVATLGLPDSPGVTAATAASTLTAPYNDLDAVESLLKANPGEVAAIAVEPVAGNMGLVLPQPGFLEGLRRLADEHGALLIFDEVMTGFRVGYGGAQGKYGITPDLTCLGKVIGGGLPAAAYGGRRDLMELIAPAGPVYQAGTLSGNPLAMAAGAATLRAIRAPGVFEQLERAAAMLCSGFEHAAAEADIALRTAYAGSMWGFFFTDEPVVDYVSAKKSDTQRYAQFFHAMLERGIYLAPAQFEASFVSLAHSDALIQETIAAAADALRSIQNAARKG</sequence>
<feature type="chain" id="PRO_1000201031" description="Glutamate-1-semialdehyde 2,1-aminomutase">
    <location>
        <begin position="1"/>
        <end position="434"/>
    </location>
</feature>
<feature type="modified residue" description="N6-(pyridoxal phosphate)lysine" evidence="1">
    <location>
        <position position="267"/>
    </location>
</feature>
<comment type="catalytic activity">
    <reaction evidence="1">
        <text>(S)-4-amino-5-oxopentanoate = 5-aminolevulinate</text>
        <dbReference type="Rhea" id="RHEA:14265"/>
        <dbReference type="ChEBI" id="CHEBI:57501"/>
        <dbReference type="ChEBI" id="CHEBI:356416"/>
        <dbReference type="EC" id="5.4.3.8"/>
    </reaction>
</comment>
<comment type="cofactor">
    <cofactor evidence="1">
        <name>pyridoxal 5'-phosphate</name>
        <dbReference type="ChEBI" id="CHEBI:597326"/>
    </cofactor>
</comment>
<comment type="pathway">
    <text evidence="1">Porphyrin-containing compound metabolism; protoporphyrin-IX biosynthesis; 5-aminolevulinate from L-glutamyl-tRNA(Glu): step 2/2.</text>
</comment>
<comment type="pathway">
    <text evidence="1">Porphyrin-containing compound metabolism; chlorophyll biosynthesis.</text>
</comment>
<comment type="subunit">
    <text evidence="1">Homodimer.</text>
</comment>
<comment type="subcellular location">
    <subcellularLocation>
        <location evidence="1">Cytoplasm</location>
    </subcellularLocation>
</comment>
<comment type="similarity">
    <text evidence="1">Belongs to the class-III pyridoxal-phosphate-dependent aminotransferase family. HemL subfamily.</text>
</comment>
<accession>A7NKV1</accession>
<name>GSA_ROSCS</name>